<feature type="chain" id="PRO_1000138778" description="Orotate phosphoribosyltransferase">
    <location>
        <begin position="1"/>
        <end position="191"/>
    </location>
</feature>
<feature type="binding site" evidence="1">
    <location>
        <begin position="114"/>
        <end position="122"/>
    </location>
    <ligand>
        <name>5-phospho-alpha-D-ribose 1-diphosphate</name>
        <dbReference type="ChEBI" id="CHEBI:58017"/>
    </ligand>
</feature>
<feature type="binding site" evidence="1">
    <location>
        <position position="118"/>
    </location>
    <ligand>
        <name>orotate</name>
        <dbReference type="ChEBI" id="CHEBI:30839"/>
    </ligand>
</feature>
<feature type="binding site" evidence="1">
    <location>
        <position position="146"/>
    </location>
    <ligand>
        <name>orotate</name>
        <dbReference type="ChEBI" id="CHEBI:30839"/>
    </ligand>
</feature>
<evidence type="ECO:0000255" key="1">
    <source>
        <dbReference type="HAMAP-Rule" id="MF_01208"/>
    </source>
</evidence>
<keyword id="KW-0328">Glycosyltransferase</keyword>
<keyword id="KW-0460">Magnesium</keyword>
<keyword id="KW-0665">Pyrimidine biosynthesis</keyword>
<keyword id="KW-1185">Reference proteome</keyword>
<keyword id="KW-0808">Transferase</keyword>
<protein>
    <recommendedName>
        <fullName evidence="1">Orotate phosphoribosyltransferase</fullName>
        <shortName evidence="1">OPRT</shortName>
        <shortName evidence="1">OPRTase</shortName>
        <ecNumber evidence="1">2.4.2.10</ecNumber>
    </recommendedName>
</protein>
<gene>
    <name evidence="1" type="primary">pyrE</name>
    <name type="ordered locus">CBO3235</name>
    <name type="ordered locus">CLC_3146</name>
</gene>
<comment type="function">
    <text evidence="1">Catalyzes the transfer of a ribosyl phosphate group from 5-phosphoribose 1-diphosphate to orotate, leading to the formation of orotidine monophosphate (OMP).</text>
</comment>
<comment type="catalytic activity">
    <reaction evidence="1">
        <text>orotidine 5'-phosphate + diphosphate = orotate + 5-phospho-alpha-D-ribose 1-diphosphate</text>
        <dbReference type="Rhea" id="RHEA:10380"/>
        <dbReference type="ChEBI" id="CHEBI:30839"/>
        <dbReference type="ChEBI" id="CHEBI:33019"/>
        <dbReference type="ChEBI" id="CHEBI:57538"/>
        <dbReference type="ChEBI" id="CHEBI:58017"/>
        <dbReference type="EC" id="2.4.2.10"/>
    </reaction>
</comment>
<comment type="cofactor">
    <cofactor evidence="1">
        <name>Mg(2+)</name>
        <dbReference type="ChEBI" id="CHEBI:18420"/>
    </cofactor>
</comment>
<comment type="pathway">
    <text evidence="1">Pyrimidine metabolism; UMP biosynthesis via de novo pathway; UMP from orotate: step 1/2.</text>
</comment>
<comment type="subunit">
    <text evidence="1">Homodimer.</text>
</comment>
<comment type="similarity">
    <text evidence="1">Belongs to the purine/pyrimidine phosphoribosyltransferase family. PyrE subfamily.</text>
</comment>
<accession>A5I6W5</accession>
<accession>A7G850</accession>
<organism>
    <name type="scientific">Clostridium botulinum (strain Hall / ATCC 3502 / NCTC 13319 / Type A)</name>
    <dbReference type="NCBI Taxonomy" id="441771"/>
    <lineage>
        <taxon>Bacteria</taxon>
        <taxon>Bacillati</taxon>
        <taxon>Bacillota</taxon>
        <taxon>Clostridia</taxon>
        <taxon>Eubacteriales</taxon>
        <taxon>Clostridiaceae</taxon>
        <taxon>Clostridium</taxon>
    </lineage>
</organism>
<name>PYRE_CLOBH</name>
<dbReference type="EC" id="2.4.2.10" evidence="1"/>
<dbReference type="EMBL" id="CP000727">
    <property type="protein sequence ID" value="ABS38585.1"/>
    <property type="molecule type" value="Genomic_DNA"/>
</dbReference>
<dbReference type="EMBL" id="AM412317">
    <property type="protein sequence ID" value="CAL84797.1"/>
    <property type="molecule type" value="Genomic_DNA"/>
</dbReference>
<dbReference type="RefSeq" id="WP_003361660.1">
    <property type="nucleotide sequence ID" value="NC_009698.1"/>
</dbReference>
<dbReference type="RefSeq" id="YP_001255725.1">
    <property type="nucleotide sequence ID" value="NC_009495.1"/>
</dbReference>
<dbReference type="RefSeq" id="YP_001388965.1">
    <property type="nucleotide sequence ID" value="NC_009698.1"/>
</dbReference>
<dbReference type="SMR" id="A5I6W5"/>
<dbReference type="GeneID" id="5186878"/>
<dbReference type="KEGG" id="cbh:CLC_3146"/>
<dbReference type="KEGG" id="cbo:CBO3235"/>
<dbReference type="PATRIC" id="fig|413999.7.peg.3214"/>
<dbReference type="HOGENOM" id="CLU_074878_3_0_9"/>
<dbReference type="UniPathway" id="UPA00070">
    <property type="reaction ID" value="UER00119"/>
</dbReference>
<dbReference type="PRO" id="PR:A5I6W5"/>
<dbReference type="Proteomes" id="UP000001986">
    <property type="component" value="Chromosome"/>
</dbReference>
<dbReference type="GO" id="GO:0000287">
    <property type="term" value="F:magnesium ion binding"/>
    <property type="evidence" value="ECO:0007669"/>
    <property type="project" value="UniProtKB-UniRule"/>
</dbReference>
<dbReference type="GO" id="GO:0004588">
    <property type="term" value="F:orotate phosphoribosyltransferase activity"/>
    <property type="evidence" value="ECO:0000318"/>
    <property type="project" value="GO_Central"/>
</dbReference>
<dbReference type="GO" id="GO:0044205">
    <property type="term" value="P:'de novo' UMP biosynthetic process"/>
    <property type="evidence" value="ECO:0007669"/>
    <property type="project" value="UniProtKB-UniRule"/>
</dbReference>
<dbReference type="GO" id="GO:0019856">
    <property type="term" value="P:pyrimidine nucleobase biosynthetic process"/>
    <property type="evidence" value="ECO:0000318"/>
    <property type="project" value="GO_Central"/>
</dbReference>
<dbReference type="GO" id="GO:0006222">
    <property type="term" value="P:UMP biosynthetic process"/>
    <property type="evidence" value="ECO:0000318"/>
    <property type="project" value="GO_Central"/>
</dbReference>
<dbReference type="CDD" id="cd06223">
    <property type="entry name" value="PRTases_typeI"/>
    <property type="match status" value="1"/>
</dbReference>
<dbReference type="Gene3D" id="3.40.50.2020">
    <property type="match status" value="1"/>
</dbReference>
<dbReference type="HAMAP" id="MF_01208">
    <property type="entry name" value="PyrE"/>
    <property type="match status" value="1"/>
</dbReference>
<dbReference type="InterPro" id="IPR023031">
    <property type="entry name" value="OPRT"/>
</dbReference>
<dbReference type="InterPro" id="IPR006273">
    <property type="entry name" value="Orotate_PRibTrfase_bac"/>
</dbReference>
<dbReference type="InterPro" id="IPR000836">
    <property type="entry name" value="PRibTrfase_dom"/>
</dbReference>
<dbReference type="InterPro" id="IPR029057">
    <property type="entry name" value="PRTase-like"/>
</dbReference>
<dbReference type="NCBIfam" id="TIGR01367">
    <property type="entry name" value="pyrE_Therm"/>
    <property type="match status" value="1"/>
</dbReference>
<dbReference type="PANTHER" id="PTHR19278">
    <property type="entry name" value="OROTATE PHOSPHORIBOSYLTRANSFERASE"/>
    <property type="match status" value="1"/>
</dbReference>
<dbReference type="PANTHER" id="PTHR19278:SF9">
    <property type="entry name" value="URIDINE 5'-MONOPHOSPHATE SYNTHASE"/>
    <property type="match status" value="1"/>
</dbReference>
<dbReference type="Pfam" id="PF00156">
    <property type="entry name" value="Pribosyltran"/>
    <property type="match status" value="1"/>
</dbReference>
<dbReference type="SUPFAM" id="SSF53271">
    <property type="entry name" value="PRTase-like"/>
    <property type="match status" value="1"/>
</dbReference>
<sequence length="191" mass="21240">MSNINVIDILKESDALLEGHFLLSSGRHSNRYCQCAKLLQCPQKAEKVISVIAEKLKEVDFNIIVGPAMGGVIVSYELARQTNKPGIFAERKEGVMCIRRGFEIKKGDKVIISEDVVTTGKSSLEVAKVIEEMGGEVVGIACIVDRRAEDIKTNYPIYSACKLEIETYEKDNCELCKKNIPFVKPGSREQK</sequence>
<proteinExistence type="inferred from homology"/>
<reference key="1">
    <citation type="journal article" date="2007" name="Genome Res.">
        <title>Genome sequence of a proteolytic (Group I) Clostridium botulinum strain Hall A and comparative analysis of the clostridial genomes.</title>
        <authorList>
            <person name="Sebaihia M."/>
            <person name="Peck M.W."/>
            <person name="Minton N.P."/>
            <person name="Thomson N.R."/>
            <person name="Holden M.T.G."/>
            <person name="Mitchell W.J."/>
            <person name="Carter A.T."/>
            <person name="Bentley S.D."/>
            <person name="Mason D.R."/>
            <person name="Crossman L."/>
            <person name="Paul C.J."/>
            <person name="Ivens A."/>
            <person name="Wells-Bennik M.H.J."/>
            <person name="Davis I.J."/>
            <person name="Cerdeno-Tarraga A.M."/>
            <person name="Churcher C."/>
            <person name="Quail M.A."/>
            <person name="Chillingworth T."/>
            <person name="Feltwell T."/>
            <person name="Fraser A."/>
            <person name="Goodhead I."/>
            <person name="Hance Z."/>
            <person name="Jagels K."/>
            <person name="Larke N."/>
            <person name="Maddison M."/>
            <person name="Moule S."/>
            <person name="Mungall K."/>
            <person name="Norbertczak H."/>
            <person name="Rabbinowitsch E."/>
            <person name="Sanders M."/>
            <person name="Simmonds M."/>
            <person name="White B."/>
            <person name="Whithead S."/>
            <person name="Parkhill J."/>
        </authorList>
    </citation>
    <scope>NUCLEOTIDE SEQUENCE [LARGE SCALE GENOMIC DNA]</scope>
    <source>
        <strain>Hall / ATCC 3502 / NCTC 13319 / Type A</strain>
    </source>
</reference>
<reference key="2">
    <citation type="journal article" date="2007" name="PLoS ONE">
        <title>Analysis of the neurotoxin complex genes in Clostridium botulinum A1-A4 and B1 strains: BoNT/A3, /Ba4 and /B1 clusters are located within plasmids.</title>
        <authorList>
            <person name="Smith T.J."/>
            <person name="Hill K.K."/>
            <person name="Foley B.T."/>
            <person name="Detter J.C."/>
            <person name="Munk A.C."/>
            <person name="Bruce D.C."/>
            <person name="Doggett N.A."/>
            <person name="Smith L.A."/>
            <person name="Marks J.D."/>
            <person name="Xie G."/>
            <person name="Brettin T.S."/>
        </authorList>
    </citation>
    <scope>NUCLEOTIDE SEQUENCE [LARGE SCALE GENOMIC DNA]</scope>
    <source>
        <strain>Hall / ATCC 3502 / NCTC 13319 / Type A</strain>
    </source>
</reference>